<dbReference type="EC" id="2.7.1.30" evidence="1"/>
<dbReference type="EMBL" id="CP000542">
    <property type="protein sequence ID" value="ABM58071.1"/>
    <property type="molecule type" value="Genomic_DNA"/>
</dbReference>
<dbReference type="RefSeq" id="WP_011810074.1">
    <property type="nucleotide sequence ID" value="NC_008786.1"/>
</dbReference>
<dbReference type="SMR" id="A1WKB4"/>
<dbReference type="STRING" id="391735.Veis_2324"/>
<dbReference type="GeneID" id="76460888"/>
<dbReference type="KEGG" id="vei:Veis_2324"/>
<dbReference type="eggNOG" id="COG0554">
    <property type="taxonomic scope" value="Bacteria"/>
</dbReference>
<dbReference type="HOGENOM" id="CLU_009281_2_3_4"/>
<dbReference type="OrthoDB" id="9805576at2"/>
<dbReference type="UniPathway" id="UPA00618">
    <property type="reaction ID" value="UER00672"/>
</dbReference>
<dbReference type="Proteomes" id="UP000000374">
    <property type="component" value="Chromosome"/>
</dbReference>
<dbReference type="GO" id="GO:0005829">
    <property type="term" value="C:cytosol"/>
    <property type="evidence" value="ECO:0007669"/>
    <property type="project" value="TreeGrafter"/>
</dbReference>
<dbReference type="GO" id="GO:0005524">
    <property type="term" value="F:ATP binding"/>
    <property type="evidence" value="ECO:0007669"/>
    <property type="project" value="UniProtKB-UniRule"/>
</dbReference>
<dbReference type="GO" id="GO:0004370">
    <property type="term" value="F:glycerol kinase activity"/>
    <property type="evidence" value="ECO:0000250"/>
    <property type="project" value="UniProtKB"/>
</dbReference>
<dbReference type="GO" id="GO:0019563">
    <property type="term" value="P:glycerol catabolic process"/>
    <property type="evidence" value="ECO:0007669"/>
    <property type="project" value="UniProtKB-UniRule"/>
</dbReference>
<dbReference type="GO" id="GO:0006071">
    <property type="term" value="P:glycerol metabolic process"/>
    <property type="evidence" value="ECO:0000250"/>
    <property type="project" value="UniProtKB"/>
</dbReference>
<dbReference type="GO" id="GO:0006072">
    <property type="term" value="P:glycerol-3-phosphate metabolic process"/>
    <property type="evidence" value="ECO:0007669"/>
    <property type="project" value="InterPro"/>
</dbReference>
<dbReference type="CDD" id="cd07786">
    <property type="entry name" value="FGGY_EcGK_like"/>
    <property type="match status" value="1"/>
</dbReference>
<dbReference type="FunFam" id="3.30.420.40:FF:000007">
    <property type="entry name" value="Glycerol kinase"/>
    <property type="match status" value="1"/>
</dbReference>
<dbReference type="FunFam" id="3.30.420.40:FF:000008">
    <property type="entry name" value="Glycerol kinase"/>
    <property type="match status" value="1"/>
</dbReference>
<dbReference type="Gene3D" id="3.30.420.40">
    <property type="match status" value="2"/>
</dbReference>
<dbReference type="HAMAP" id="MF_00186">
    <property type="entry name" value="Glycerol_kin"/>
    <property type="match status" value="1"/>
</dbReference>
<dbReference type="InterPro" id="IPR043129">
    <property type="entry name" value="ATPase_NBD"/>
</dbReference>
<dbReference type="InterPro" id="IPR000577">
    <property type="entry name" value="Carb_kinase_FGGY"/>
</dbReference>
<dbReference type="InterPro" id="IPR018483">
    <property type="entry name" value="Carb_kinase_FGGY_CS"/>
</dbReference>
<dbReference type="InterPro" id="IPR018485">
    <property type="entry name" value="FGGY_C"/>
</dbReference>
<dbReference type="InterPro" id="IPR018484">
    <property type="entry name" value="FGGY_N"/>
</dbReference>
<dbReference type="InterPro" id="IPR005999">
    <property type="entry name" value="Glycerol_kin"/>
</dbReference>
<dbReference type="NCBIfam" id="TIGR01311">
    <property type="entry name" value="glycerol_kin"/>
    <property type="match status" value="1"/>
</dbReference>
<dbReference type="NCBIfam" id="NF000756">
    <property type="entry name" value="PRK00047.1"/>
    <property type="match status" value="1"/>
</dbReference>
<dbReference type="PANTHER" id="PTHR10196:SF69">
    <property type="entry name" value="GLYCEROL KINASE"/>
    <property type="match status" value="1"/>
</dbReference>
<dbReference type="PANTHER" id="PTHR10196">
    <property type="entry name" value="SUGAR KINASE"/>
    <property type="match status" value="1"/>
</dbReference>
<dbReference type="Pfam" id="PF02782">
    <property type="entry name" value="FGGY_C"/>
    <property type="match status" value="1"/>
</dbReference>
<dbReference type="Pfam" id="PF00370">
    <property type="entry name" value="FGGY_N"/>
    <property type="match status" value="1"/>
</dbReference>
<dbReference type="PIRSF" id="PIRSF000538">
    <property type="entry name" value="GlpK"/>
    <property type="match status" value="1"/>
</dbReference>
<dbReference type="SUPFAM" id="SSF53067">
    <property type="entry name" value="Actin-like ATPase domain"/>
    <property type="match status" value="2"/>
</dbReference>
<dbReference type="PROSITE" id="PS00933">
    <property type="entry name" value="FGGY_KINASES_1"/>
    <property type="match status" value="1"/>
</dbReference>
<dbReference type="PROSITE" id="PS00445">
    <property type="entry name" value="FGGY_KINASES_2"/>
    <property type="match status" value="1"/>
</dbReference>
<protein>
    <recommendedName>
        <fullName evidence="1">Glycerol kinase</fullName>
        <ecNumber evidence="1">2.7.1.30</ecNumber>
    </recommendedName>
    <alternativeName>
        <fullName evidence="1">ATP:glycerol 3-phosphotransferase</fullName>
    </alternativeName>
    <alternativeName>
        <fullName evidence="1">Glycerokinase</fullName>
        <shortName evidence="1">GK</shortName>
    </alternativeName>
</protein>
<proteinExistence type="inferred from homology"/>
<evidence type="ECO:0000255" key="1">
    <source>
        <dbReference type="HAMAP-Rule" id="MF_00186"/>
    </source>
</evidence>
<name>GLPK_VEREI</name>
<comment type="function">
    <text evidence="1">Key enzyme in the regulation of glycerol uptake and metabolism. Catalyzes the phosphorylation of glycerol to yield sn-glycerol 3-phosphate.</text>
</comment>
<comment type="catalytic activity">
    <reaction evidence="1">
        <text>glycerol + ATP = sn-glycerol 3-phosphate + ADP + H(+)</text>
        <dbReference type="Rhea" id="RHEA:21644"/>
        <dbReference type="ChEBI" id="CHEBI:15378"/>
        <dbReference type="ChEBI" id="CHEBI:17754"/>
        <dbReference type="ChEBI" id="CHEBI:30616"/>
        <dbReference type="ChEBI" id="CHEBI:57597"/>
        <dbReference type="ChEBI" id="CHEBI:456216"/>
        <dbReference type="EC" id="2.7.1.30"/>
    </reaction>
</comment>
<comment type="activity regulation">
    <text evidence="1">Inhibited by fructose 1,6-bisphosphate (FBP).</text>
</comment>
<comment type="pathway">
    <text evidence="1">Polyol metabolism; glycerol degradation via glycerol kinase pathway; sn-glycerol 3-phosphate from glycerol: step 1/1.</text>
</comment>
<comment type="similarity">
    <text evidence="1">Belongs to the FGGY kinase family.</text>
</comment>
<gene>
    <name evidence="1" type="primary">glpK</name>
    <name type="ordered locus">Veis_2324</name>
</gene>
<accession>A1WKB4</accession>
<organism>
    <name type="scientific">Verminephrobacter eiseniae (strain EF01-2)</name>
    <dbReference type="NCBI Taxonomy" id="391735"/>
    <lineage>
        <taxon>Bacteria</taxon>
        <taxon>Pseudomonadati</taxon>
        <taxon>Pseudomonadota</taxon>
        <taxon>Betaproteobacteria</taxon>
        <taxon>Burkholderiales</taxon>
        <taxon>Comamonadaceae</taxon>
        <taxon>Verminephrobacter</taxon>
    </lineage>
</organism>
<sequence>MTYLLALDQGTSSSRSIVFDEHGRIVAQAQLELPQIYPRPGWVEHDPLEIWRSQLATARAALAKAGIAANAVRAVGIANQRETTVLWNRKTGQPVHHAIVWQDRRAEPACAQLREQGHAGAIQAKTGLLIDAYFSGSKLQWLLDHVPGAREAAERGELAFGTVDSWLIWKLTHGQRHLTDVSNAARTMLLNVHTNQWDDDLLALLRIPRALMPEVLPSSADFGDTAADLLGHGIRIGGVAGDQQSALFGQACFTAGMAKNTYGTGCFMLMHLGARFQTSDNGLLTTSAAQLAPKPGAGSGQAEPALAQRAYAMEGSVFIGGAVVQWLRDGLRAITSSAGIEALAHSVPDAGGVMMVPAFTGLGAPYWKPEARGSITGLTRGSTLAHIARAALESIAYQSAALLQAMGRDAVAAGGAPVSELRVDGGACINDLLMQFQADLLGIPVLRPAVIETTALGAAYLAGLSSDLYHSTDELAQLWRAERRFEPRLDRARAQELMAHWEHAVRQATAR</sequence>
<keyword id="KW-0067">ATP-binding</keyword>
<keyword id="KW-0319">Glycerol metabolism</keyword>
<keyword id="KW-0418">Kinase</keyword>
<keyword id="KW-0547">Nucleotide-binding</keyword>
<keyword id="KW-1185">Reference proteome</keyword>
<keyword id="KW-0808">Transferase</keyword>
<reference key="1">
    <citation type="submission" date="2006-12" db="EMBL/GenBank/DDBJ databases">
        <title>Complete sequence of chromosome 1 of Verminephrobacter eiseniae EF01-2.</title>
        <authorList>
            <person name="Copeland A."/>
            <person name="Lucas S."/>
            <person name="Lapidus A."/>
            <person name="Barry K."/>
            <person name="Detter J.C."/>
            <person name="Glavina del Rio T."/>
            <person name="Dalin E."/>
            <person name="Tice H."/>
            <person name="Pitluck S."/>
            <person name="Chertkov O."/>
            <person name="Brettin T."/>
            <person name="Bruce D."/>
            <person name="Han C."/>
            <person name="Tapia R."/>
            <person name="Gilna P."/>
            <person name="Schmutz J."/>
            <person name="Larimer F."/>
            <person name="Land M."/>
            <person name="Hauser L."/>
            <person name="Kyrpides N."/>
            <person name="Kim E."/>
            <person name="Stahl D."/>
            <person name="Richardson P."/>
        </authorList>
    </citation>
    <scope>NUCLEOTIDE SEQUENCE [LARGE SCALE GENOMIC DNA]</scope>
    <source>
        <strain>EF01-2</strain>
    </source>
</reference>
<feature type="chain" id="PRO_1000098771" description="Glycerol kinase">
    <location>
        <begin position="1"/>
        <end position="511"/>
    </location>
</feature>
<feature type="binding site" evidence="1">
    <location>
        <position position="11"/>
    </location>
    <ligand>
        <name>ADP</name>
        <dbReference type="ChEBI" id="CHEBI:456216"/>
    </ligand>
</feature>
<feature type="binding site" evidence="1">
    <location>
        <position position="11"/>
    </location>
    <ligand>
        <name>ATP</name>
        <dbReference type="ChEBI" id="CHEBI:30616"/>
    </ligand>
</feature>
<feature type="binding site" evidence="1">
    <location>
        <position position="11"/>
    </location>
    <ligand>
        <name>sn-glycerol 3-phosphate</name>
        <dbReference type="ChEBI" id="CHEBI:57597"/>
    </ligand>
</feature>
<feature type="binding site" evidence="1">
    <location>
        <position position="12"/>
    </location>
    <ligand>
        <name>ATP</name>
        <dbReference type="ChEBI" id="CHEBI:30616"/>
    </ligand>
</feature>
<feature type="binding site" evidence="1">
    <location>
        <position position="13"/>
    </location>
    <ligand>
        <name>ATP</name>
        <dbReference type="ChEBI" id="CHEBI:30616"/>
    </ligand>
</feature>
<feature type="binding site" evidence="1">
    <location>
        <position position="15"/>
    </location>
    <ligand>
        <name>ADP</name>
        <dbReference type="ChEBI" id="CHEBI:456216"/>
    </ligand>
</feature>
<feature type="binding site" evidence="1">
    <location>
        <position position="81"/>
    </location>
    <ligand>
        <name>glycerol</name>
        <dbReference type="ChEBI" id="CHEBI:17754"/>
    </ligand>
</feature>
<feature type="binding site" evidence="1">
    <location>
        <position position="81"/>
    </location>
    <ligand>
        <name>sn-glycerol 3-phosphate</name>
        <dbReference type="ChEBI" id="CHEBI:57597"/>
    </ligand>
</feature>
<feature type="binding site" evidence="1">
    <location>
        <position position="82"/>
    </location>
    <ligand>
        <name>glycerol</name>
        <dbReference type="ChEBI" id="CHEBI:17754"/>
    </ligand>
</feature>
<feature type="binding site" evidence="1">
    <location>
        <position position="82"/>
    </location>
    <ligand>
        <name>sn-glycerol 3-phosphate</name>
        <dbReference type="ChEBI" id="CHEBI:57597"/>
    </ligand>
</feature>
<feature type="binding site" evidence="1">
    <location>
        <position position="133"/>
    </location>
    <ligand>
        <name>glycerol</name>
        <dbReference type="ChEBI" id="CHEBI:17754"/>
    </ligand>
</feature>
<feature type="binding site" evidence="1">
    <location>
        <position position="133"/>
    </location>
    <ligand>
        <name>sn-glycerol 3-phosphate</name>
        <dbReference type="ChEBI" id="CHEBI:57597"/>
    </ligand>
</feature>
<feature type="binding site" evidence="1">
    <location>
        <position position="242"/>
    </location>
    <ligand>
        <name>glycerol</name>
        <dbReference type="ChEBI" id="CHEBI:17754"/>
    </ligand>
</feature>
<feature type="binding site" evidence="1">
    <location>
        <position position="242"/>
    </location>
    <ligand>
        <name>sn-glycerol 3-phosphate</name>
        <dbReference type="ChEBI" id="CHEBI:57597"/>
    </ligand>
</feature>
<feature type="binding site" evidence="1">
    <location>
        <position position="243"/>
    </location>
    <ligand>
        <name>glycerol</name>
        <dbReference type="ChEBI" id="CHEBI:17754"/>
    </ligand>
</feature>
<feature type="binding site" evidence="1">
    <location>
        <position position="264"/>
    </location>
    <ligand>
        <name>ADP</name>
        <dbReference type="ChEBI" id="CHEBI:456216"/>
    </ligand>
</feature>
<feature type="binding site" evidence="1">
    <location>
        <position position="264"/>
    </location>
    <ligand>
        <name>ATP</name>
        <dbReference type="ChEBI" id="CHEBI:30616"/>
    </ligand>
</feature>
<feature type="binding site" evidence="1">
    <location>
        <position position="321"/>
    </location>
    <ligand>
        <name>ADP</name>
        <dbReference type="ChEBI" id="CHEBI:456216"/>
    </ligand>
</feature>
<feature type="binding site" evidence="1">
    <location>
        <position position="321"/>
    </location>
    <ligand>
        <name>ATP</name>
        <dbReference type="ChEBI" id="CHEBI:30616"/>
    </ligand>
</feature>
<feature type="binding site" evidence="1">
    <location>
        <position position="325"/>
    </location>
    <ligand>
        <name>ATP</name>
        <dbReference type="ChEBI" id="CHEBI:30616"/>
    </ligand>
</feature>
<feature type="binding site" evidence="1">
    <location>
        <position position="426"/>
    </location>
    <ligand>
        <name>ADP</name>
        <dbReference type="ChEBI" id="CHEBI:456216"/>
    </ligand>
</feature>
<feature type="binding site" evidence="1">
    <location>
        <position position="426"/>
    </location>
    <ligand>
        <name>ATP</name>
        <dbReference type="ChEBI" id="CHEBI:30616"/>
    </ligand>
</feature>
<feature type="binding site" evidence="1">
    <location>
        <position position="430"/>
    </location>
    <ligand>
        <name>ADP</name>
        <dbReference type="ChEBI" id="CHEBI:456216"/>
    </ligand>
</feature>